<name>FACE1_CAEEL</name>
<proteinExistence type="evidence at protein level"/>
<dbReference type="EC" id="3.4.24.84" evidence="4"/>
<dbReference type="EMBL" id="Z81461">
    <property type="protein sequence ID" value="CAB03839.1"/>
    <property type="molecule type" value="Genomic_DNA"/>
</dbReference>
<dbReference type="PIR" id="T18917">
    <property type="entry name" value="T18917"/>
</dbReference>
<dbReference type="RefSeq" id="NP_492582.1">
    <property type="nucleotide sequence ID" value="NM_060181.7"/>
</dbReference>
<dbReference type="SMR" id="Q9XVE5"/>
<dbReference type="FunCoup" id="Q9XVE5">
    <property type="interactions" value="3183"/>
</dbReference>
<dbReference type="STRING" id="6239.C04F12.10.1"/>
<dbReference type="PaxDb" id="6239-C04F12.10.1"/>
<dbReference type="PeptideAtlas" id="Q9XVE5"/>
<dbReference type="EnsemblMetazoa" id="C04F12.10.1">
    <property type="protein sequence ID" value="C04F12.10.1"/>
    <property type="gene ID" value="WBGene00001405"/>
</dbReference>
<dbReference type="GeneID" id="172820"/>
<dbReference type="KEGG" id="cel:CELE_C04F12.10"/>
<dbReference type="UCSC" id="C04F12.10">
    <property type="organism name" value="c. elegans"/>
</dbReference>
<dbReference type="AGR" id="WB:WBGene00001405"/>
<dbReference type="CTD" id="172820"/>
<dbReference type="WormBase" id="C04F12.10">
    <property type="protein sequence ID" value="CE19683"/>
    <property type="gene ID" value="WBGene00001405"/>
    <property type="gene designation" value="fce-1"/>
</dbReference>
<dbReference type="eggNOG" id="KOG2719">
    <property type="taxonomic scope" value="Eukaryota"/>
</dbReference>
<dbReference type="GeneTree" id="ENSGT00390000002053"/>
<dbReference type="HOGENOM" id="CLU_025947_3_3_1"/>
<dbReference type="InParanoid" id="Q9XVE5"/>
<dbReference type="OMA" id="FVIEEKF"/>
<dbReference type="OrthoDB" id="360839at2759"/>
<dbReference type="PhylomeDB" id="Q9XVE5"/>
<dbReference type="PRO" id="PR:Q9XVE5"/>
<dbReference type="Proteomes" id="UP000001940">
    <property type="component" value="Chromosome I"/>
</dbReference>
<dbReference type="Bgee" id="WBGene00001405">
    <property type="expression patterns" value="Expressed in germ line (C elegans) and 4 other cell types or tissues"/>
</dbReference>
<dbReference type="GO" id="GO:0005789">
    <property type="term" value="C:endoplasmic reticulum membrane"/>
    <property type="evidence" value="ECO:0000318"/>
    <property type="project" value="GO_Central"/>
</dbReference>
<dbReference type="GO" id="GO:0016020">
    <property type="term" value="C:membrane"/>
    <property type="evidence" value="ECO:0000314"/>
    <property type="project" value="WormBase"/>
</dbReference>
<dbReference type="GO" id="GO:0046872">
    <property type="term" value="F:metal ion binding"/>
    <property type="evidence" value="ECO:0007669"/>
    <property type="project" value="UniProtKB-KW"/>
</dbReference>
<dbReference type="GO" id="GO:0004222">
    <property type="term" value="F:metalloendopeptidase activity"/>
    <property type="evidence" value="ECO:0000314"/>
    <property type="project" value="WormBase"/>
</dbReference>
<dbReference type="GO" id="GO:0071586">
    <property type="term" value="P:CAAX-box protein processing"/>
    <property type="evidence" value="ECO:0000314"/>
    <property type="project" value="WormBase"/>
</dbReference>
<dbReference type="CDD" id="cd07343">
    <property type="entry name" value="M48A_Zmpste24p_like"/>
    <property type="match status" value="1"/>
</dbReference>
<dbReference type="FunFam" id="3.30.2010.10:FF:000005">
    <property type="entry name" value="CAAX prenyl protease"/>
    <property type="match status" value="1"/>
</dbReference>
<dbReference type="Gene3D" id="3.30.2010.10">
    <property type="entry name" value="Metalloproteases ('zincins'), catalytic domain"/>
    <property type="match status" value="1"/>
</dbReference>
<dbReference type="InterPro" id="IPR027057">
    <property type="entry name" value="CAXX_Prtase_1"/>
</dbReference>
<dbReference type="InterPro" id="IPR001915">
    <property type="entry name" value="Peptidase_M48"/>
</dbReference>
<dbReference type="InterPro" id="IPR032456">
    <property type="entry name" value="Peptidase_M48_N"/>
</dbReference>
<dbReference type="PANTHER" id="PTHR10120">
    <property type="entry name" value="CAAX PRENYL PROTEASE 1"/>
    <property type="match status" value="1"/>
</dbReference>
<dbReference type="Pfam" id="PF01435">
    <property type="entry name" value="Peptidase_M48"/>
    <property type="match status" value="1"/>
</dbReference>
<dbReference type="Pfam" id="PF16491">
    <property type="entry name" value="Peptidase_M48_N"/>
    <property type="match status" value="1"/>
</dbReference>
<accession>Q9XVE5</accession>
<sequence length="442" mass="50699">MDASCLFKALLATNWALFLWDQYITFRQYKAHKNAVKRPNEVKELIGEEDYKKARDYKIDNHLFGFFHSWFNQLLLTAQLIGGYYPFLWYATASYPLHVAVFLSINSIIETIIDLPWDLYSTFIIEDAHGFNKQTIGFYFVDKIKKMLVGFALTMPIVYGIEWIIVNGGPYFFVYIWLFVSVVVLLLMTIYPTFIAPLFDKYFPLPDGDLKTKIEQLAASLSYPLTELYVVNGSKRSAHSNAYMYGFWKNKRIVLYDTLLSGAEKEKVHELYVAAGEKIEETENDKKRGMNNDEVVAVLGHELGHWALWHTLINLVITEVNLFFSFAVFGYFYKWEALYQGFGYHDTPPVIGMMLIFQFVLALYNQLASIGMVIHSRSAEFGADEFAANLGHGENLIGALTKLGVDNLSMPINDSLYSWCTHTHPPVVERVAAVRAFQAKNK</sequence>
<protein>
    <recommendedName>
        <fullName evidence="6">CAAX prenyl protease 1 homolog</fullName>
        <ecNumber evidence="4">3.4.24.84</ecNumber>
    </recommendedName>
    <alternativeName>
        <fullName evidence="5">Farnesylated proteins-converting enzyme 1</fullName>
        <shortName evidence="5">FACE-1</shortName>
    </alternativeName>
</protein>
<keyword id="KW-0256">Endoplasmic reticulum</keyword>
<keyword id="KW-0378">Hydrolase</keyword>
<keyword id="KW-0472">Membrane</keyword>
<keyword id="KW-0479">Metal-binding</keyword>
<keyword id="KW-0482">Metalloprotease</keyword>
<keyword id="KW-0645">Protease</keyword>
<keyword id="KW-1185">Reference proteome</keyword>
<keyword id="KW-0812">Transmembrane</keyword>
<keyword id="KW-1133">Transmembrane helix</keyword>
<keyword id="KW-0862">Zinc</keyword>
<gene>
    <name evidence="8" type="primary">fce-1</name>
    <name evidence="8" type="ORF">C04F12.10</name>
</gene>
<organism evidence="7">
    <name type="scientific">Caenorhabditis elegans</name>
    <dbReference type="NCBI Taxonomy" id="6239"/>
    <lineage>
        <taxon>Eukaryota</taxon>
        <taxon>Metazoa</taxon>
        <taxon>Ecdysozoa</taxon>
        <taxon>Nematoda</taxon>
        <taxon>Chromadorea</taxon>
        <taxon>Rhabditida</taxon>
        <taxon>Rhabditina</taxon>
        <taxon>Rhabditomorpha</taxon>
        <taxon>Rhabditoidea</taxon>
        <taxon>Rhabditidae</taxon>
        <taxon>Peloderinae</taxon>
        <taxon>Caenorhabditis</taxon>
    </lineage>
</organism>
<evidence type="ECO:0000250" key="1">
    <source>
        <dbReference type="UniProtKB" id="O75844"/>
    </source>
</evidence>
<evidence type="ECO:0000250" key="2">
    <source>
        <dbReference type="UniProtKB" id="P47154"/>
    </source>
</evidence>
<evidence type="ECO:0000255" key="3"/>
<evidence type="ECO:0000269" key="4">
    <source>
    </source>
</evidence>
<evidence type="ECO:0000303" key="5">
    <source>
    </source>
</evidence>
<evidence type="ECO:0000305" key="6"/>
<evidence type="ECO:0000312" key="7">
    <source>
        <dbReference type="Proteomes" id="UP000001940"/>
    </source>
</evidence>
<evidence type="ECO:0000312" key="8">
    <source>
        <dbReference type="WormBase" id="C04F12.10"/>
    </source>
</evidence>
<feature type="chain" id="PRO_0000431785" description="CAAX prenyl protease 1 homolog" evidence="6">
    <location>
        <begin position="1"/>
        <end position="442"/>
    </location>
</feature>
<feature type="topological domain" description="Lumenal" evidence="3">
    <location>
        <begin position="1"/>
        <end position="62"/>
    </location>
</feature>
<feature type="transmembrane region" description="Helical" evidence="3">
    <location>
        <begin position="63"/>
        <end position="83"/>
    </location>
</feature>
<feature type="topological domain" description="Cytoplasmic" evidence="3">
    <location>
        <position position="84"/>
    </location>
</feature>
<feature type="transmembrane region" description="Helical" evidence="3">
    <location>
        <begin position="85"/>
        <end position="105"/>
    </location>
</feature>
<feature type="topological domain" description="Lumenal" evidence="3">
    <location>
        <begin position="106"/>
        <end position="146"/>
    </location>
</feature>
<feature type="transmembrane region" description="Helical" evidence="3">
    <location>
        <begin position="147"/>
        <end position="167"/>
    </location>
</feature>
<feature type="topological domain" description="Cytoplasmic" evidence="3">
    <location>
        <begin position="168"/>
        <end position="170"/>
    </location>
</feature>
<feature type="transmembrane region" description="Helical" evidence="3">
    <location>
        <begin position="171"/>
        <end position="191"/>
    </location>
</feature>
<feature type="topological domain" description="Lumenal" evidence="3">
    <location>
        <begin position="192"/>
        <end position="311"/>
    </location>
</feature>
<feature type="transmembrane region" description="Helical" evidence="3">
    <location>
        <begin position="312"/>
        <end position="332"/>
    </location>
</feature>
<feature type="topological domain" description="Cytoplasmic" evidence="3">
    <location>
        <begin position="333"/>
        <end position="349"/>
    </location>
</feature>
<feature type="transmembrane region" description="Helical" evidence="3">
    <location>
        <begin position="350"/>
        <end position="370"/>
    </location>
</feature>
<feature type="topological domain" description="Lumenal" evidence="3">
    <location>
        <begin position="371"/>
        <end position="442"/>
    </location>
</feature>
<feature type="active site" evidence="1">
    <location>
        <position position="302"/>
    </location>
</feature>
<feature type="active site" description="Proton donor" evidence="3">
    <location>
        <position position="384"/>
    </location>
</feature>
<feature type="binding site" evidence="1">
    <location>
        <position position="301"/>
    </location>
    <ligand>
        <name>Zn(2+)</name>
        <dbReference type="ChEBI" id="CHEBI:29105"/>
        <note>catalytic</note>
    </ligand>
</feature>
<feature type="binding site" evidence="1">
    <location>
        <position position="305"/>
    </location>
    <ligand>
        <name>Zn(2+)</name>
        <dbReference type="ChEBI" id="CHEBI:29105"/>
        <note>catalytic</note>
    </ligand>
</feature>
<feature type="binding site" evidence="1">
    <location>
        <position position="380"/>
    </location>
    <ligand>
        <name>Zn(2+)</name>
        <dbReference type="ChEBI" id="CHEBI:29105"/>
        <note>catalytic</note>
    </ligand>
</feature>
<comment type="function">
    <text evidence="4">Proteolytically removes the C-terminal three residues of farnesylated proteins.</text>
</comment>
<comment type="catalytic activity">
    <reaction evidence="4">
        <text>Hydrolyzes the peptide bond -P2-(S-farnesyl or geranylgeranyl)C-P1'-P2'-P3'-COOH where P1' and P2' are amino acids with aliphatic side chains and P3' is any C-terminal residue.</text>
        <dbReference type="EC" id="3.4.24.84"/>
    </reaction>
</comment>
<comment type="cofactor">
    <cofactor evidence="1">
        <name>Zn(2+)</name>
        <dbReference type="ChEBI" id="CHEBI:29105"/>
    </cofactor>
    <text evidence="1">Binds 1 zinc ion per subunit.</text>
</comment>
<comment type="subcellular location">
    <subcellularLocation>
        <location evidence="2">Endoplasmic reticulum membrane</location>
        <topology evidence="3">Multi-pass membrane protein</topology>
    </subcellularLocation>
    <subcellularLocation>
        <location evidence="4">Membrane</location>
    </subcellularLocation>
</comment>
<comment type="similarity">
    <text evidence="6">Belongs to the peptidase M48A family.</text>
</comment>
<reference evidence="6" key="1">
    <citation type="journal article" date="2003" name="Biochem. J.">
        <title>Identification, functional expression and enzymic analysis of two distinct CaaX proteases from Caenorhabditis elegans.</title>
        <authorList>
            <person name="Cadinanos J."/>
            <person name="Schmidt W.K."/>
            <person name="Fueyo A."/>
            <person name="Varela I."/>
            <person name="Lopez-Otin C."/>
            <person name="Freije J.M.P."/>
        </authorList>
    </citation>
    <scope>NUCLEOTIDE SEQUENCE [MRNA]</scope>
    <scope>FUNCTION</scope>
    <scope>CATALYTIC ACTIVITY</scope>
</reference>
<reference evidence="7" key="2">
    <citation type="journal article" date="1998" name="Science">
        <title>Genome sequence of the nematode C. elegans: a platform for investigating biology.</title>
        <authorList>
            <consortium name="The C. elegans sequencing consortium"/>
        </authorList>
    </citation>
    <scope>NUCLEOTIDE SEQUENCE [LARGE SCALE GENOMIC DNA]</scope>
    <source>
        <strain evidence="7">Bristol N2</strain>
    </source>
</reference>